<dbReference type="EC" id="2.7.4.9" evidence="1"/>
<dbReference type="EMBL" id="AM286690">
    <property type="protein sequence ID" value="CAL16522.1"/>
    <property type="molecule type" value="Genomic_DNA"/>
</dbReference>
<dbReference type="RefSeq" id="WP_011588357.1">
    <property type="nucleotide sequence ID" value="NC_008260.1"/>
</dbReference>
<dbReference type="SMR" id="Q0VQM6"/>
<dbReference type="STRING" id="393595.ABO_1074"/>
<dbReference type="KEGG" id="abo:ABO_1074"/>
<dbReference type="eggNOG" id="COG0125">
    <property type="taxonomic scope" value="Bacteria"/>
</dbReference>
<dbReference type="HOGENOM" id="CLU_049131_0_2_6"/>
<dbReference type="OrthoDB" id="9774907at2"/>
<dbReference type="Proteomes" id="UP000008871">
    <property type="component" value="Chromosome"/>
</dbReference>
<dbReference type="GO" id="GO:0005829">
    <property type="term" value="C:cytosol"/>
    <property type="evidence" value="ECO:0007669"/>
    <property type="project" value="TreeGrafter"/>
</dbReference>
<dbReference type="GO" id="GO:0005524">
    <property type="term" value="F:ATP binding"/>
    <property type="evidence" value="ECO:0007669"/>
    <property type="project" value="UniProtKB-UniRule"/>
</dbReference>
<dbReference type="GO" id="GO:0004798">
    <property type="term" value="F:dTMP kinase activity"/>
    <property type="evidence" value="ECO:0007669"/>
    <property type="project" value="UniProtKB-UniRule"/>
</dbReference>
<dbReference type="GO" id="GO:0006233">
    <property type="term" value="P:dTDP biosynthetic process"/>
    <property type="evidence" value="ECO:0007669"/>
    <property type="project" value="InterPro"/>
</dbReference>
<dbReference type="GO" id="GO:0006235">
    <property type="term" value="P:dTTP biosynthetic process"/>
    <property type="evidence" value="ECO:0007669"/>
    <property type="project" value="UniProtKB-UniRule"/>
</dbReference>
<dbReference type="GO" id="GO:0006227">
    <property type="term" value="P:dUDP biosynthetic process"/>
    <property type="evidence" value="ECO:0007669"/>
    <property type="project" value="TreeGrafter"/>
</dbReference>
<dbReference type="CDD" id="cd01672">
    <property type="entry name" value="TMPK"/>
    <property type="match status" value="1"/>
</dbReference>
<dbReference type="FunFam" id="3.40.50.300:FF:000225">
    <property type="entry name" value="Thymidylate kinase"/>
    <property type="match status" value="1"/>
</dbReference>
<dbReference type="Gene3D" id="3.40.50.300">
    <property type="entry name" value="P-loop containing nucleotide triphosphate hydrolases"/>
    <property type="match status" value="1"/>
</dbReference>
<dbReference type="HAMAP" id="MF_00165">
    <property type="entry name" value="Thymidylate_kinase"/>
    <property type="match status" value="1"/>
</dbReference>
<dbReference type="InterPro" id="IPR027417">
    <property type="entry name" value="P-loop_NTPase"/>
</dbReference>
<dbReference type="InterPro" id="IPR039430">
    <property type="entry name" value="Thymidylate_kin-like_dom"/>
</dbReference>
<dbReference type="InterPro" id="IPR018094">
    <property type="entry name" value="Thymidylate_kinase"/>
</dbReference>
<dbReference type="NCBIfam" id="TIGR00041">
    <property type="entry name" value="DTMP_kinase"/>
    <property type="match status" value="1"/>
</dbReference>
<dbReference type="PANTHER" id="PTHR10344">
    <property type="entry name" value="THYMIDYLATE KINASE"/>
    <property type="match status" value="1"/>
</dbReference>
<dbReference type="PANTHER" id="PTHR10344:SF4">
    <property type="entry name" value="UMP-CMP KINASE 2, MITOCHONDRIAL"/>
    <property type="match status" value="1"/>
</dbReference>
<dbReference type="Pfam" id="PF02223">
    <property type="entry name" value="Thymidylate_kin"/>
    <property type="match status" value="1"/>
</dbReference>
<dbReference type="SUPFAM" id="SSF52540">
    <property type="entry name" value="P-loop containing nucleoside triphosphate hydrolases"/>
    <property type="match status" value="1"/>
</dbReference>
<reference key="1">
    <citation type="journal article" date="2006" name="Nat. Biotechnol.">
        <title>Genome sequence of the ubiquitous hydrocarbon-degrading marine bacterium Alcanivorax borkumensis.</title>
        <authorList>
            <person name="Schneiker S."/>
            <person name="Martins dos Santos V.A.P."/>
            <person name="Bartels D."/>
            <person name="Bekel T."/>
            <person name="Brecht M."/>
            <person name="Buhrmester J."/>
            <person name="Chernikova T.N."/>
            <person name="Denaro R."/>
            <person name="Ferrer M."/>
            <person name="Gertler C."/>
            <person name="Goesmann A."/>
            <person name="Golyshina O.V."/>
            <person name="Kaminski F."/>
            <person name="Khachane A.N."/>
            <person name="Lang S."/>
            <person name="Linke B."/>
            <person name="McHardy A.C."/>
            <person name="Meyer F."/>
            <person name="Nechitaylo T."/>
            <person name="Puehler A."/>
            <person name="Regenhardt D."/>
            <person name="Rupp O."/>
            <person name="Sabirova J.S."/>
            <person name="Selbitschka W."/>
            <person name="Yakimov M.M."/>
            <person name="Timmis K.N."/>
            <person name="Vorhoelter F.-J."/>
            <person name="Weidner S."/>
            <person name="Kaiser O."/>
            <person name="Golyshin P.N."/>
        </authorList>
    </citation>
    <scope>NUCLEOTIDE SEQUENCE [LARGE SCALE GENOMIC DNA]</scope>
    <source>
        <strain>ATCC 700651 / DSM 11573 / NCIMB 13689 / SK2</strain>
    </source>
</reference>
<comment type="function">
    <text evidence="1">Phosphorylation of dTMP to form dTDP in both de novo and salvage pathways of dTTP synthesis.</text>
</comment>
<comment type="catalytic activity">
    <reaction evidence="1">
        <text>dTMP + ATP = dTDP + ADP</text>
        <dbReference type="Rhea" id="RHEA:13517"/>
        <dbReference type="ChEBI" id="CHEBI:30616"/>
        <dbReference type="ChEBI" id="CHEBI:58369"/>
        <dbReference type="ChEBI" id="CHEBI:63528"/>
        <dbReference type="ChEBI" id="CHEBI:456216"/>
        <dbReference type="EC" id="2.7.4.9"/>
    </reaction>
</comment>
<comment type="similarity">
    <text evidence="1">Belongs to the thymidylate kinase family.</text>
</comment>
<gene>
    <name evidence="1" type="primary">tmk</name>
    <name type="ordered locus">ABO_1074</name>
</gene>
<organism>
    <name type="scientific">Alcanivorax borkumensis (strain ATCC 700651 / DSM 11573 / NCIMB 13689 / SK2)</name>
    <dbReference type="NCBI Taxonomy" id="393595"/>
    <lineage>
        <taxon>Bacteria</taxon>
        <taxon>Pseudomonadati</taxon>
        <taxon>Pseudomonadota</taxon>
        <taxon>Gammaproteobacteria</taxon>
        <taxon>Oceanospirillales</taxon>
        <taxon>Alcanivoracaceae</taxon>
        <taxon>Alcanivorax</taxon>
    </lineage>
</organism>
<evidence type="ECO:0000255" key="1">
    <source>
        <dbReference type="HAMAP-Rule" id="MF_00165"/>
    </source>
</evidence>
<sequence>MSGRFITLEGGEGAGKSSNLVWLAEALRAEGKTVMVSREPGGTALAESIREVLLAPSNEVMADDTELLLVFAARAQHLEQKIRPALARGEWVLCDRFLDATWAYQGAGRGLDSAAIAALEALVIRDTRPDMTILFDVPVEVGMARAGKRAALDRIEQEDRAFFDRIRQCYLARAAQEPNRFRTVDASQPLESVQQQLARIVEEMQAWP</sequence>
<proteinExistence type="inferred from homology"/>
<keyword id="KW-0067">ATP-binding</keyword>
<keyword id="KW-0418">Kinase</keyword>
<keyword id="KW-0545">Nucleotide biosynthesis</keyword>
<keyword id="KW-0547">Nucleotide-binding</keyword>
<keyword id="KW-1185">Reference proteome</keyword>
<keyword id="KW-0808">Transferase</keyword>
<name>KTHY_ALCBS</name>
<protein>
    <recommendedName>
        <fullName evidence="1">Thymidylate kinase</fullName>
        <ecNumber evidence="1">2.7.4.9</ecNumber>
    </recommendedName>
    <alternativeName>
        <fullName evidence="1">dTMP kinase</fullName>
    </alternativeName>
</protein>
<accession>Q0VQM6</accession>
<feature type="chain" id="PRO_1000023140" description="Thymidylate kinase">
    <location>
        <begin position="1"/>
        <end position="208"/>
    </location>
</feature>
<feature type="binding site" evidence="1">
    <location>
        <begin position="10"/>
        <end position="17"/>
    </location>
    <ligand>
        <name>ATP</name>
        <dbReference type="ChEBI" id="CHEBI:30616"/>
    </ligand>
</feature>